<proteinExistence type="inferred from homology"/>
<dbReference type="EMBL" id="CP001401">
    <property type="protein sequence ID" value="ACP55292.1"/>
    <property type="molecule type" value="Genomic_DNA"/>
</dbReference>
<dbReference type="RefSeq" id="WP_012718817.1">
    <property type="nucleotide sequence ID" value="NC_012632.1"/>
</dbReference>
<dbReference type="SMR" id="C3N5L7"/>
<dbReference type="KEGG" id="sim:M1627_1409"/>
<dbReference type="HOGENOM" id="CLU_142653_1_0_2"/>
<dbReference type="Proteomes" id="UP000002307">
    <property type="component" value="Chromosome"/>
</dbReference>
<dbReference type="HAMAP" id="MF_00343">
    <property type="entry name" value="UPF0148"/>
    <property type="match status" value="1"/>
</dbReference>
<dbReference type="InterPro" id="IPR009563">
    <property type="entry name" value="SSSCA1"/>
</dbReference>
<dbReference type="InterPro" id="IPR022954">
    <property type="entry name" value="UPF0148"/>
</dbReference>
<dbReference type="NCBIfam" id="NF001644">
    <property type="entry name" value="PRK00420.1-1"/>
    <property type="match status" value="1"/>
</dbReference>
<dbReference type="NCBIfam" id="NF001647">
    <property type="entry name" value="PRK00420.1-4"/>
    <property type="match status" value="1"/>
</dbReference>
<dbReference type="Pfam" id="PF06677">
    <property type="entry name" value="Auto_anti-p27"/>
    <property type="match status" value="1"/>
</dbReference>
<reference key="1">
    <citation type="journal article" date="2009" name="Proc. Natl. Acad. Sci. U.S.A.">
        <title>Biogeography of the Sulfolobus islandicus pan-genome.</title>
        <authorList>
            <person name="Reno M.L."/>
            <person name="Held N.L."/>
            <person name="Fields C.J."/>
            <person name="Burke P.V."/>
            <person name="Whitaker R.J."/>
        </authorList>
    </citation>
    <scope>NUCLEOTIDE SEQUENCE [LARGE SCALE GENOMIC DNA]</scope>
    <source>
        <strain>M.16.27</strain>
    </source>
</reference>
<accession>C3N5L7</accession>
<name>Y1409_SACI3</name>
<gene>
    <name type="ordered locus">M1627_1409</name>
</gene>
<feature type="chain" id="PRO_1000205282" description="UPF0148 protein M1627_1409">
    <location>
        <begin position="1"/>
        <end position="118"/>
    </location>
</feature>
<sequence length="118" mass="13431">MTNESEVGVKKAAELLRQGATMLEEACPICKMPLFKLKNGDVVCPVHGKVYIVKSDDEEKIVKRNLQLDEIESILIDGLYLSAKKMKEDPLDSERIVQIIRYLDALERLRKIKINSSE</sequence>
<evidence type="ECO:0000255" key="1">
    <source>
        <dbReference type="HAMAP-Rule" id="MF_00343"/>
    </source>
</evidence>
<comment type="similarity">
    <text evidence="1">Belongs to the UPF0148 family.</text>
</comment>
<organism>
    <name type="scientific">Saccharolobus islandicus (strain M.16.27)</name>
    <name type="common">Sulfolobus islandicus</name>
    <dbReference type="NCBI Taxonomy" id="427318"/>
    <lineage>
        <taxon>Archaea</taxon>
        <taxon>Thermoproteota</taxon>
        <taxon>Thermoprotei</taxon>
        <taxon>Sulfolobales</taxon>
        <taxon>Sulfolobaceae</taxon>
        <taxon>Saccharolobus</taxon>
    </lineage>
</organism>
<protein>
    <recommendedName>
        <fullName evidence="1">UPF0148 protein M1627_1409</fullName>
    </recommendedName>
</protein>